<reference key="1">
    <citation type="journal article" date="2011" name="Appl. Environ. Microbiol.">
        <title>Genomic potential of Marinobacter aquaeolei, a biogeochemical 'opportunitroph'.</title>
        <authorList>
            <person name="Singer E."/>
            <person name="Webb E.A."/>
            <person name="Nelson W.C."/>
            <person name="Heidelberg J.F."/>
            <person name="Ivanova N."/>
            <person name="Pati A."/>
            <person name="Edwards K.J."/>
        </authorList>
    </citation>
    <scope>NUCLEOTIDE SEQUENCE [LARGE SCALE GENOMIC DNA]</scope>
    <source>
        <strain>ATCC 700491 / DSM 11845 / VT8</strain>
    </source>
</reference>
<keyword id="KW-0963">Cytoplasm</keyword>
<keyword id="KW-0489">Methyltransferase</keyword>
<keyword id="KW-0949">S-adenosyl-L-methionine</keyword>
<keyword id="KW-0808">Transferase</keyword>
<accession>A1U560</accession>
<gene>
    <name evidence="1" type="primary">tpm</name>
    <name type="ordered locus">Maqu_3055</name>
</gene>
<evidence type="ECO:0000255" key="1">
    <source>
        <dbReference type="HAMAP-Rule" id="MF_00812"/>
    </source>
</evidence>
<name>TPMT_MARN8</name>
<dbReference type="EC" id="2.1.1.67" evidence="1"/>
<dbReference type="EMBL" id="CP000514">
    <property type="protein sequence ID" value="ABM20129.1"/>
    <property type="molecule type" value="Genomic_DNA"/>
</dbReference>
<dbReference type="SMR" id="A1U560"/>
<dbReference type="STRING" id="351348.Maqu_3055"/>
<dbReference type="KEGG" id="maq:Maqu_3055"/>
<dbReference type="eggNOG" id="COG0500">
    <property type="taxonomic scope" value="Bacteria"/>
</dbReference>
<dbReference type="HOGENOM" id="CLU_085515_1_0_6"/>
<dbReference type="OrthoDB" id="9778208at2"/>
<dbReference type="Proteomes" id="UP000000998">
    <property type="component" value="Chromosome"/>
</dbReference>
<dbReference type="GO" id="GO:0005737">
    <property type="term" value="C:cytoplasm"/>
    <property type="evidence" value="ECO:0007669"/>
    <property type="project" value="UniProtKB-SubCell"/>
</dbReference>
<dbReference type="GO" id="GO:0008119">
    <property type="term" value="F:thiopurine S-methyltransferase activity"/>
    <property type="evidence" value="ECO:0007669"/>
    <property type="project" value="UniProtKB-UniRule"/>
</dbReference>
<dbReference type="GO" id="GO:0032259">
    <property type="term" value="P:methylation"/>
    <property type="evidence" value="ECO:0007669"/>
    <property type="project" value="UniProtKB-KW"/>
</dbReference>
<dbReference type="GO" id="GO:0010038">
    <property type="term" value="P:response to metal ion"/>
    <property type="evidence" value="ECO:0007669"/>
    <property type="project" value="InterPro"/>
</dbReference>
<dbReference type="FunFam" id="3.40.50.150:FF:000101">
    <property type="entry name" value="Thiopurine S-methyltransferase"/>
    <property type="match status" value="1"/>
</dbReference>
<dbReference type="Gene3D" id="3.40.50.150">
    <property type="entry name" value="Vaccinia Virus protein VP39"/>
    <property type="match status" value="1"/>
</dbReference>
<dbReference type="HAMAP" id="MF_00812">
    <property type="entry name" value="Thiopur_methtran"/>
    <property type="match status" value="1"/>
</dbReference>
<dbReference type="InterPro" id="IPR029063">
    <property type="entry name" value="SAM-dependent_MTases_sf"/>
</dbReference>
<dbReference type="InterPro" id="IPR022474">
    <property type="entry name" value="Thiopur_S-MeTfrase_Se/Te_detox"/>
</dbReference>
<dbReference type="InterPro" id="IPR025835">
    <property type="entry name" value="Thiopurine_S-MeTrfase"/>
</dbReference>
<dbReference type="InterPro" id="IPR008854">
    <property type="entry name" value="TPMT"/>
</dbReference>
<dbReference type="NCBIfam" id="NF009732">
    <property type="entry name" value="PRK13255.1"/>
    <property type="match status" value="1"/>
</dbReference>
<dbReference type="NCBIfam" id="TIGR03840">
    <property type="entry name" value="TMPT_Se_Te"/>
    <property type="match status" value="1"/>
</dbReference>
<dbReference type="PANTHER" id="PTHR10259">
    <property type="entry name" value="THIOPURINE S-METHYLTRANSFERASE"/>
    <property type="match status" value="1"/>
</dbReference>
<dbReference type="PANTHER" id="PTHR10259:SF11">
    <property type="entry name" value="THIOPURINE S-METHYLTRANSFERASE"/>
    <property type="match status" value="1"/>
</dbReference>
<dbReference type="Pfam" id="PF05724">
    <property type="entry name" value="TPMT"/>
    <property type="match status" value="1"/>
</dbReference>
<dbReference type="PIRSF" id="PIRSF023956">
    <property type="entry name" value="Thiopurine_S-methyltransferase"/>
    <property type="match status" value="1"/>
</dbReference>
<dbReference type="SUPFAM" id="SSF53335">
    <property type="entry name" value="S-adenosyl-L-methionine-dependent methyltransferases"/>
    <property type="match status" value="1"/>
</dbReference>
<dbReference type="PROSITE" id="PS51585">
    <property type="entry name" value="SAM_MT_TPMT"/>
    <property type="match status" value="1"/>
</dbReference>
<organism>
    <name type="scientific">Marinobacter nauticus (strain ATCC 700491 / DSM 11845 / VT8)</name>
    <name type="common">Marinobacter aquaeolei</name>
    <dbReference type="NCBI Taxonomy" id="351348"/>
    <lineage>
        <taxon>Bacteria</taxon>
        <taxon>Pseudomonadati</taxon>
        <taxon>Pseudomonadota</taxon>
        <taxon>Gammaproteobacteria</taxon>
        <taxon>Pseudomonadales</taxon>
        <taxon>Marinobacteraceae</taxon>
        <taxon>Marinobacter</taxon>
    </lineage>
</organism>
<sequence>MEHEFWHERWAKDQIGFHEGTVNQYLHDHWPELAGNGTDAVFVPLCGKAHDMWWLHDRGHPIIGVELSEVACKDFFEEAQEKASVHPGEPFTTFRHDDLQIWCGDYFQLVPDDLKHIRLVYDRAALIALPPEMRKSYVNHLTAIIPDDTRILLITLDYDSSEMQGPPFNVTDDEVFRLYGEDYEINQVLKRDMARDNPFAKRRGLRNGATESVFTLVKK</sequence>
<feature type="chain" id="PRO_1000047206" description="Thiopurine S-methyltransferase">
    <location>
        <begin position="1"/>
        <end position="219"/>
    </location>
</feature>
<feature type="binding site" evidence="1">
    <location>
        <position position="10"/>
    </location>
    <ligand>
        <name>S-adenosyl-L-methionine</name>
        <dbReference type="ChEBI" id="CHEBI:59789"/>
    </ligand>
</feature>
<feature type="binding site" evidence="1">
    <location>
        <position position="45"/>
    </location>
    <ligand>
        <name>S-adenosyl-L-methionine</name>
        <dbReference type="ChEBI" id="CHEBI:59789"/>
    </ligand>
</feature>
<feature type="binding site" evidence="1">
    <location>
        <position position="66"/>
    </location>
    <ligand>
        <name>S-adenosyl-L-methionine</name>
        <dbReference type="ChEBI" id="CHEBI:59789"/>
    </ligand>
</feature>
<feature type="binding site" evidence="1">
    <location>
        <position position="123"/>
    </location>
    <ligand>
        <name>S-adenosyl-L-methionine</name>
        <dbReference type="ChEBI" id="CHEBI:59789"/>
    </ligand>
</feature>
<comment type="catalytic activity">
    <reaction evidence="1">
        <text>S-adenosyl-L-methionine + a thiopurine = S-adenosyl-L-homocysteine + a thiopurine S-methylether.</text>
        <dbReference type="EC" id="2.1.1.67"/>
    </reaction>
</comment>
<comment type="subcellular location">
    <subcellularLocation>
        <location evidence="1">Cytoplasm</location>
    </subcellularLocation>
</comment>
<comment type="similarity">
    <text evidence="1">Belongs to the class I-like SAM-binding methyltransferase superfamily. TPMT family.</text>
</comment>
<proteinExistence type="inferred from homology"/>
<protein>
    <recommendedName>
        <fullName evidence="1">Thiopurine S-methyltransferase</fullName>
        <ecNumber evidence="1">2.1.1.67</ecNumber>
    </recommendedName>
    <alternativeName>
        <fullName evidence="1">Thiopurine methyltransferase</fullName>
    </alternativeName>
</protein>